<comment type="function">
    <text evidence="1">This protein binds to the 23S rRNA, and is important in its secondary structure. It is located near the subunit interface in the base of the L7/L12 stalk, and near the tRNA binding site of the peptidyltransferase center.</text>
</comment>
<comment type="subunit">
    <text evidence="1">Part of the 50S ribosomal subunit.</text>
</comment>
<comment type="similarity">
    <text evidence="1">Belongs to the universal ribosomal protein uL6 family.</text>
</comment>
<feature type="chain" id="PRO_1000055240" description="Large ribosomal subunit protein uL6">
    <location>
        <begin position="1"/>
        <end position="177"/>
    </location>
</feature>
<keyword id="KW-1185">Reference proteome</keyword>
<keyword id="KW-0687">Ribonucleoprotein</keyword>
<keyword id="KW-0689">Ribosomal protein</keyword>
<keyword id="KW-0694">RNA-binding</keyword>
<keyword id="KW-0699">rRNA-binding</keyword>
<reference key="1">
    <citation type="journal article" date="2007" name="PLoS Genet.">
        <title>A tale of two oxidation states: bacterial colonization of arsenic-rich environments.</title>
        <authorList>
            <person name="Muller D."/>
            <person name="Medigue C."/>
            <person name="Koechler S."/>
            <person name="Barbe V."/>
            <person name="Barakat M."/>
            <person name="Talla E."/>
            <person name="Bonnefoy V."/>
            <person name="Krin E."/>
            <person name="Arsene-Ploetze F."/>
            <person name="Carapito C."/>
            <person name="Chandler M."/>
            <person name="Cournoyer B."/>
            <person name="Cruveiller S."/>
            <person name="Dossat C."/>
            <person name="Duval S."/>
            <person name="Heymann M."/>
            <person name="Leize E."/>
            <person name="Lieutaud A."/>
            <person name="Lievremont D."/>
            <person name="Makita Y."/>
            <person name="Mangenot S."/>
            <person name="Nitschke W."/>
            <person name="Ortet P."/>
            <person name="Perdrial N."/>
            <person name="Schoepp B."/>
            <person name="Siguier P."/>
            <person name="Simeonova D.D."/>
            <person name="Rouy Z."/>
            <person name="Segurens B."/>
            <person name="Turlin E."/>
            <person name="Vallenet D."/>
            <person name="van Dorsselaer A."/>
            <person name="Weiss S."/>
            <person name="Weissenbach J."/>
            <person name="Lett M.-C."/>
            <person name="Danchin A."/>
            <person name="Bertin P.N."/>
        </authorList>
    </citation>
    <scope>NUCLEOTIDE SEQUENCE [LARGE SCALE GENOMIC DNA]</scope>
    <source>
        <strain>ULPAs1</strain>
    </source>
</reference>
<organism>
    <name type="scientific">Herminiimonas arsenicoxydans</name>
    <dbReference type="NCBI Taxonomy" id="204773"/>
    <lineage>
        <taxon>Bacteria</taxon>
        <taxon>Pseudomonadati</taxon>
        <taxon>Pseudomonadota</taxon>
        <taxon>Betaproteobacteria</taxon>
        <taxon>Burkholderiales</taxon>
        <taxon>Oxalobacteraceae</taxon>
        <taxon>Herminiimonas</taxon>
    </lineage>
</organism>
<gene>
    <name evidence="1" type="primary">rplF</name>
    <name type="ordered locus">HEAR3151</name>
</gene>
<sequence>MSRVGKMPIALPSGAEATITAEQITVKGPLGSLSQALNGLVQIENASGTLNFKPANDSREANAMSGTLRALVNNMVNGVTKGFEKKLMLVGVGFRAAAQGDKLNLSLGFSHPVVHAMPAGIKVETPTQTEILIKGIDRQSVGQVAAEVRAYRPPEPYKGKGVRYSDEVVVIKETKKK</sequence>
<protein>
    <recommendedName>
        <fullName evidence="1">Large ribosomal subunit protein uL6</fullName>
    </recommendedName>
    <alternativeName>
        <fullName evidence="2">50S ribosomal protein L6</fullName>
    </alternativeName>
</protein>
<accession>A4G9S3</accession>
<name>RL6_HERAR</name>
<dbReference type="EMBL" id="CU207211">
    <property type="protein sequence ID" value="CAL63260.1"/>
    <property type="molecule type" value="Genomic_DNA"/>
</dbReference>
<dbReference type="SMR" id="A4G9S3"/>
<dbReference type="STRING" id="204773.HEAR3151"/>
<dbReference type="KEGG" id="har:HEAR3151"/>
<dbReference type="eggNOG" id="COG0097">
    <property type="taxonomic scope" value="Bacteria"/>
</dbReference>
<dbReference type="HOGENOM" id="CLU_065464_1_2_4"/>
<dbReference type="OrthoDB" id="9805007at2"/>
<dbReference type="Proteomes" id="UP000006697">
    <property type="component" value="Chromosome"/>
</dbReference>
<dbReference type="GO" id="GO:0022625">
    <property type="term" value="C:cytosolic large ribosomal subunit"/>
    <property type="evidence" value="ECO:0007669"/>
    <property type="project" value="TreeGrafter"/>
</dbReference>
<dbReference type="GO" id="GO:0019843">
    <property type="term" value="F:rRNA binding"/>
    <property type="evidence" value="ECO:0007669"/>
    <property type="project" value="UniProtKB-UniRule"/>
</dbReference>
<dbReference type="GO" id="GO:0003735">
    <property type="term" value="F:structural constituent of ribosome"/>
    <property type="evidence" value="ECO:0007669"/>
    <property type="project" value="InterPro"/>
</dbReference>
<dbReference type="GO" id="GO:0002181">
    <property type="term" value="P:cytoplasmic translation"/>
    <property type="evidence" value="ECO:0007669"/>
    <property type="project" value="TreeGrafter"/>
</dbReference>
<dbReference type="FunFam" id="3.90.930.12:FF:000001">
    <property type="entry name" value="50S ribosomal protein L6"/>
    <property type="match status" value="1"/>
</dbReference>
<dbReference type="FunFam" id="3.90.930.12:FF:000002">
    <property type="entry name" value="50S ribosomal protein L6"/>
    <property type="match status" value="1"/>
</dbReference>
<dbReference type="Gene3D" id="3.90.930.12">
    <property type="entry name" value="Ribosomal protein L6, alpha-beta domain"/>
    <property type="match status" value="2"/>
</dbReference>
<dbReference type="HAMAP" id="MF_01365_B">
    <property type="entry name" value="Ribosomal_uL6_B"/>
    <property type="match status" value="1"/>
</dbReference>
<dbReference type="InterPro" id="IPR000702">
    <property type="entry name" value="Ribosomal_uL6-like"/>
</dbReference>
<dbReference type="InterPro" id="IPR036789">
    <property type="entry name" value="Ribosomal_uL6-like_a/b-dom_sf"/>
</dbReference>
<dbReference type="InterPro" id="IPR020040">
    <property type="entry name" value="Ribosomal_uL6_a/b-dom"/>
</dbReference>
<dbReference type="InterPro" id="IPR019906">
    <property type="entry name" value="Ribosomal_uL6_bac-type"/>
</dbReference>
<dbReference type="InterPro" id="IPR002358">
    <property type="entry name" value="Ribosomal_uL6_CS"/>
</dbReference>
<dbReference type="NCBIfam" id="TIGR03654">
    <property type="entry name" value="L6_bact"/>
    <property type="match status" value="1"/>
</dbReference>
<dbReference type="PANTHER" id="PTHR11655">
    <property type="entry name" value="60S/50S RIBOSOMAL PROTEIN L6/L9"/>
    <property type="match status" value="1"/>
</dbReference>
<dbReference type="PANTHER" id="PTHR11655:SF14">
    <property type="entry name" value="LARGE RIBOSOMAL SUBUNIT PROTEIN UL6M"/>
    <property type="match status" value="1"/>
</dbReference>
<dbReference type="Pfam" id="PF00347">
    <property type="entry name" value="Ribosomal_L6"/>
    <property type="match status" value="2"/>
</dbReference>
<dbReference type="PIRSF" id="PIRSF002162">
    <property type="entry name" value="Ribosomal_L6"/>
    <property type="match status" value="1"/>
</dbReference>
<dbReference type="PRINTS" id="PR00059">
    <property type="entry name" value="RIBOSOMALL6"/>
</dbReference>
<dbReference type="SUPFAM" id="SSF56053">
    <property type="entry name" value="Ribosomal protein L6"/>
    <property type="match status" value="2"/>
</dbReference>
<dbReference type="PROSITE" id="PS00525">
    <property type="entry name" value="RIBOSOMAL_L6_1"/>
    <property type="match status" value="1"/>
</dbReference>
<proteinExistence type="inferred from homology"/>
<evidence type="ECO:0000255" key="1">
    <source>
        <dbReference type="HAMAP-Rule" id="MF_01365"/>
    </source>
</evidence>
<evidence type="ECO:0000305" key="2"/>